<evidence type="ECO:0000255" key="1">
    <source>
        <dbReference type="HAMAP-Rule" id="MF_01588"/>
    </source>
</evidence>
<reference key="1">
    <citation type="journal article" date="2010" name="Environ. Microbiol.">
        <title>The genome of Syntrophomonas wolfei: new insights into syntrophic metabolism and biohydrogen production.</title>
        <authorList>
            <person name="Sieber J.R."/>
            <person name="Sims D.R."/>
            <person name="Han C."/>
            <person name="Kim E."/>
            <person name="Lykidis A."/>
            <person name="Lapidus A.L."/>
            <person name="McDonnald E."/>
            <person name="Rohlin L."/>
            <person name="Culley D.E."/>
            <person name="Gunsalus R."/>
            <person name="McInerney M.J."/>
        </authorList>
    </citation>
    <scope>NUCLEOTIDE SEQUENCE [LARGE SCALE GENOMIC DNA]</scope>
    <source>
        <strain>DSM 2245B / Goettingen</strain>
    </source>
</reference>
<comment type="function">
    <text evidence="1">DNA ligase that catalyzes the formation of phosphodiester linkages between 5'-phosphoryl and 3'-hydroxyl groups in double-stranded DNA using NAD as a coenzyme and as the energy source for the reaction. It is essential for DNA replication and repair of damaged DNA.</text>
</comment>
<comment type="catalytic activity">
    <reaction evidence="1">
        <text>NAD(+) + (deoxyribonucleotide)n-3'-hydroxyl + 5'-phospho-(deoxyribonucleotide)m = (deoxyribonucleotide)n+m + AMP + beta-nicotinamide D-nucleotide.</text>
        <dbReference type="EC" id="6.5.1.2"/>
    </reaction>
</comment>
<comment type="cofactor">
    <cofactor evidence="1">
        <name>Mg(2+)</name>
        <dbReference type="ChEBI" id="CHEBI:18420"/>
    </cofactor>
    <cofactor evidence="1">
        <name>Mn(2+)</name>
        <dbReference type="ChEBI" id="CHEBI:29035"/>
    </cofactor>
</comment>
<comment type="similarity">
    <text evidence="1">Belongs to the NAD-dependent DNA ligase family. LigA subfamily.</text>
</comment>
<dbReference type="EC" id="6.5.1.2" evidence="1"/>
<dbReference type="EMBL" id="CP000448">
    <property type="protein sequence ID" value="ABI67709.1"/>
    <property type="molecule type" value="Genomic_DNA"/>
</dbReference>
<dbReference type="RefSeq" id="WP_011639817.1">
    <property type="nucleotide sequence ID" value="NC_008346.1"/>
</dbReference>
<dbReference type="SMR" id="Q0AZZ5"/>
<dbReference type="STRING" id="335541.Swol_0369"/>
<dbReference type="KEGG" id="swo:Swol_0369"/>
<dbReference type="eggNOG" id="COG0272">
    <property type="taxonomic scope" value="Bacteria"/>
</dbReference>
<dbReference type="HOGENOM" id="CLU_007764_2_1_9"/>
<dbReference type="OrthoDB" id="9759736at2"/>
<dbReference type="Proteomes" id="UP000001968">
    <property type="component" value="Chromosome"/>
</dbReference>
<dbReference type="GO" id="GO:0005829">
    <property type="term" value="C:cytosol"/>
    <property type="evidence" value="ECO:0007669"/>
    <property type="project" value="TreeGrafter"/>
</dbReference>
<dbReference type="GO" id="GO:0003677">
    <property type="term" value="F:DNA binding"/>
    <property type="evidence" value="ECO:0007669"/>
    <property type="project" value="InterPro"/>
</dbReference>
<dbReference type="GO" id="GO:0003911">
    <property type="term" value="F:DNA ligase (NAD+) activity"/>
    <property type="evidence" value="ECO:0007669"/>
    <property type="project" value="UniProtKB-UniRule"/>
</dbReference>
<dbReference type="GO" id="GO:0046872">
    <property type="term" value="F:metal ion binding"/>
    <property type="evidence" value="ECO:0007669"/>
    <property type="project" value="UniProtKB-KW"/>
</dbReference>
<dbReference type="GO" id="GO:0006281">
    <property type="term" value="P:DNA repair"/>
    <property type="evidence" value="ECO:0007669"/>
    <property type="project" value="UniProtKB-KW"/>
</dbReference>
<dbReference type="GO" id="GO:0006260">
    <property type="term" value="P:DNA replication"/>
    <property type="evidence" value="ECO:0007669"/>
    <property type="project" value="UniProtKB-KW"/>
</dbReference>
<dbReference type="CDD" id="cd00114">
    <property type="entry name" value="LIGANc"/>
    <property type="match status" value="1"/>
</dbReference>
<dbReference type="FunFam" id="1.10.150.20:FF:000006">
    <property type="entry name" value="DNA ligase"/>
    <property type="match status" value="1"/>
</dbReference>
<dbReference type="FunFam" id="1.10.150.20:FF:000007">
    <property type="entry name" value="DNA ligase"/>
    <property type="match status" value="1"/>
</dbReference>
<dbReference type="FunFam" id="1.10.287.610:FF:000002">
    <property type="entry name" value="DNA ligase"/>
    <property type="match status" value="1"/>
</dbReference>
<dbReference type="FunFam" id="2.40.50.140:FF:000012">
    <property type="entry name" value="DNA ligase"/>
    <property type="match status" value="1"/>
</dbReference>
<dbReference type="FunFam" id="3.30.470.30:FF:000001">
    <property type="entry name" value="DNA ligase"/>
    <property type="match status" value="1"/>
</dbReference>
<dbReference type="Gene3D" id="6.20.10.30">
    <property type="match status" value="1"/>
</dbReference>
<dbReference type="Gene3D" id="1.10.150.20">
    <property type="entry name" value="5' to 3' exonuclease, C-terminal subdomain"/>
    <property type="match status" value="2"/>
</dbReference>
<dbReference type="Gene3D" id="3.40.50.10190">
    <property type="entry name" value="BRCT domain"/>
    <property type="match status" value="1"/>
</dbReference>
<dbReference type="Gene3D" id="3.30.470.30">
    <property type="entry name" value="DNA ligase/mRNA capping enzyme"/>
    <property type="match status" value="1"/>
</dbReference>
<dbReference type="Gene3D" id="1.10.287.610">
    <property type="entry name" value="Helix hairpin bin"/>
    <property type="match status" value="1"/>
</dbReference>
<dbReference type="Gene3D" id="2.40.50.140">
    <property type="entry name" value="Nucleic acid-binding proteins"/>
    <property type="match status" value="1"/>
</dbReference>
<dbReference type="HAMAP" id="MF_01588">
    <property type="entry name" value="DNA_ligase_A"/>
    <property type="match status" value="1"/>
</dbReference>
<dbReference type="InterPro" id="IPR001357">
    <property type="entry name" value="BRCT_dom"/>
</dbReference>
<dbReference type="InterPro" id="IPR036420">
    <property type="entry name" value="BRCT_dom_sf"/>
</dbReference>
<dbReference type="InterPro" id="IPR041663">
    <property type="entry name" value="DisA/LigA_HHH"/>
</dbReference>
<dbReference type="InterPro" id="IPR001679">
    <property type="entry name" value="DNA_ligase"/>
</dbReference>
<dbReference type="InterPro" id="IPR018239">
    <property type="entry name" value="DNA_ligase_AS"/>
</dbReference>
<dbReference type="InterPro" id="IPR013839">
    <property type="entry name" value="DNAligase_adenylation"/>
</dbReference>
<dbReference type="InterPro" id="IPR013840">
    <property type="entry name" value="DNAligase_N"/>
</dbReference>
<dbReference type="InterPro" id="IPR003583">
    <property type="entry name" value="Hlx-hairpin-Hlx_DNA-bd_motif"/>
</dbReference>
<dbReference type="InterPro" id="IPR012340">
    <property type="entry name" value="NA-bd_OB-fold"/>
</dbReference>
<dbReference type="InterPro" id="IPR004150">
    <property type="entry name" value="NAD_DNA_ligase_OB"/>
</dbReference>
<dbReference type="InterPro" id="IPR010994">
    <property type="entry name" value="RuvA_2-like"/>
</dbReference>
<dbReference type="InterPro" id="IPR004149">
    <property type="entry name" value="Znf_DNAligase_C4"/>
</dbReference>
<dbReference type="NCBIfam" id="TIGR00575">
    <property type="entry name" value="dnlj"/>
    <property type="match status" value="1"/>
</dbReference>
<dbReference type="NCBIfam" id="NF005932">
    <property type="entry name" value="PRK07956.1"/>
    <property type="match status" value="1"/>
</dbReference>
<dbReference type="PANTHER" id="PTHR23389">
    <property type="entry name" value="CHROMOSOME TRANSMISSION FIDELITY FACTOR 18"/>
    <property type="match status" value="1"/>
</dbReference>
<dbReference type="PANTHER" id="PTHR23389:SF9">
    <property type="entry name" value="DNA LIGASE"/>
    <property type="match status" value="1"/>
</dbReference>
<dbReference type="Pfam" id="PF00533">
    <property type="entry name" value="BRCT"/>
    <property type="match status" value="1"/>
</dbReference>
<dbReference type="Pfam" id="PF01653">
    <property type="entry name" value="DNA_ligase_aden"/>
    <property type="match status" value="1"/>
</dbReference>
<dbReference type="Pfam" id="PF03120">
    <property type="entry name" value="DNA_ligase_OB"/>
    <property type="match status" value="1"/>
</dbReference>
<dbReference type="Pfam" id="PF03119">
    <property type="entry name" value="DNA_ligase_ZBD"/>
    <property type="match status" value="1"/>
</dbReference>
<dbReference type="Pfam" id="PF12826">
    <property type="entry name" value="HHH_2"/>
    <property type="match status" value="1"/>
</dbReference>
<dbReference type="Pfam" id="PF14520">
    <property type="entry name" value="HHH_5"/>
    <property type="match status" value="1"/>
</dbReference>
<dbReference type="Pfam" id="PF22745">
    <property type="entry name" value="Nlig-Ia"/>
    <property type="match status" value="1"/>
</dbReference>
<dbReference type="PIRSF" id="PIRSF001604">
    <property type="entry name" value="LigA"/>
    <property type="match status" value="1"/>
</dbReference>
<dbReference type="SMART" id="SM00292">
    <property type="entry name" value="BRCT"/>
    <property type="match status" value="1"/>
</dbReference>
<dbReference type="SMART" id="SM00278">
    <property type="entry name" value="HhH1"/>
    <property type="match status" value="3"/>
</dbReference>
<dbReference type="SMART" id="SM00532">
    <property type="entry name" value="LIGANc"/>
    <property type="match status" value="1"/>
</dbReference>
<dbReference type="SUPFAM" id="SSF52113">
    <property type="entry name" value="BRCT domain"/>
    <property type="match status" value="1"/>
</dbReference>
<dbReference type="SUPFAM" id="SSF56091">
    <property type="entry name" value="DNA ligase/mRNA capping enzyme, catalytic domain"/>
    <property type="match status" value="1"/>
</dbReference>
<dbReference type="SUPFAM" id="SSF50249">
    <property type="entry name" value="Nucleic acid-binding proteins"/>
    <property type="match status" value="1"/>
</dbReference>
<dbReference type="SUPFAM" id="SSF47781">
    <property type="entry name" value="RuvA domain 2-like"/>
    <property type="match status" value="1"/>
</dbReference>
<dbReference type="PROSITE" id="PS50172">
    <property type="entry name" value="BRCT"/>
    <property type="match status" value="1"/>
</dbReference>
<dbReference type="PROSITE" id="PS01055">
    <property type="entry name" value="DNA_LIGASE_N1"/>
    <property type="match status" value="1"/>
</dbReference>
<name>DNLJ_SYNWW</name>
<protein>
    <recommendedName>
        <fullName evidence="1">DNA ligase</fullName>
        <ecNumber evidence="1">6.5.1.2</ecNumber>
    </recommendedName>
    <alternativeName>
        <fullName evidence="1">Polydeoxyribonucleotide synthase [NAD(+)]</fullName>
    </alternativeName>
</protein>
<gene>
    <name evidence="1" type="primary">ligA</name>
    <name type="ordered locus">Swol_0369</name>
</gene>
<keyword id="KW-0227">DNA damage</keyword>
<keyword id="KW-0234">DNA repair</keyword>
<keyword id="KW-0235">DNA replication</keyword>
<keyword id="KW-0436">Ligase</keyword>
<keyword id="KW-0460">Magnesium</keyword>
<keyword id="KW-0464">Manganese</keyword>
<keyword id="KW-0479">Metal-binding</keyword>
<keyword id="KW-0520">NAD</keyword>
<keyword id="KW-1185">Reference proteome</keyword>
<keyword id="KW-0862">Zinc</keyword>
<sequence length="661" mass="73989">MEVSSRIKELREEMQKHDYHYYILDAPLISDSGYDRLMQELKKLEEEYPQYITADSPTQRVAGKASEKFSPVRHRFPLLSLDNAFSYQDLLEFDRRIGRVARTLSYMAELKIDGVSIALVYENGVLLNAATRGDGLVGEDVTANIRTIKTIPLRLRHSLPRLEVRGEVFMPKQEFIRLNEEKEEKGERVFANPRNAAAGSLRQLDPRVTAGRALSAFVYDIIYMEGQTLAEQQEAWHFMQELGLPVNPEVRFCADINAVLAFTEEYAEKRHELPYEIDGVVVKLNTLAEREELGATARSPRWAMAYKFPAEEKETRLLGVEINVGRTGIIAPTALLEPVFLAGTTVSRASMHNFDLIKEKDLRIGDMVLLHKAGDIIPEIIASLPEKRSGEERVITPPENCPACDSKVARFAGEVAYRCENINCPARLKESLIFFASRGAMDIDGLGSAVIEQLVNKDMVKRIDDLYRLREEEITALERMGPKSAANLIKAINESKSRPLSRLLTALGIRHIGARSAKILSRHIHDIDDFYKLGVENLTSIPEIGPKMAESMVNFFAEPRNRETIEDLKDLGVNTREEAIEAGEQLLQGKTFVLTGTLPSLTRQQASEMIESRGGKVSSSVSKKTSYVVAGDDPGSKLDKALQLELTILDEAGFLNLLGLS</sequence>
<accession>Q0AZZ5</accession>
<feature type="chain" id="PRO_0000313489" description="DNA ligase">
    <location>
        <begin position="1"/>
        <end position="661"/>
    </location>
</feature>
<feature type="domain" description="BRCT" evidence="1">
    <location>
        <begin position="582"/>
        <end position="661"/>
    </location>
</feature>
<feature type="active site" description="N6-AMP-lysine intermediate" evidence="1">
    <location>
        <position position="111"/>
    </location>
</feature>
<feature type="binding site" evidence="1">
    <location>
        <begin position="31"/>
        <end position="35"/>
    </location>
    <ligand>
        <name>NAD(+)</name>
        <dbReference type="ChEBI" id="CHEBI:57540"/>
    </ligand>
</feature>
<feature type="binding site" evidence="1">
    <location>
        <begin position="80"/>
        <end position="81"/>
    </location>
    <ligand>
        <name>NAD(+)</name>
        <dbReference type="ChEBI" id="CHEBI:57540"/>
    </ligand>
</feature>
<feature type="binding site" evidence="1">
    <location>
        <position position="109"/>
    </location>
    <ligand>
        <name>NAD(+)</name>
        <dbReference type="ChEBI" id="CHEBI:57540"/>
    </ligand>
</feature>
<feature type="binding site" evidence="1">
    <location>
        <position position="132"/>
    </location>
    <ligand>
        <name>NAD(+)</name>
        <dbReference type="ChEBI" id="CHEBI:57540"/>
    </ligand>
</feature>
<feature type="binding site" evidence="1">
    <location>
        <position position="167"/>
    </location>
    <ligand>
        <name>NAD(+)</name>
        <dbReference type="ChEBI" id="CHEBI:57540"/>
    </ligand>
</feature>
<feature type="binding site" evidence="1">
    <location>
        <position position="283"/>
    </location>
    <ligand>
        <name>NAD(+)</name>
        <dbReference type="ChEBI" id="CHEBI:57540"/>
    </ligand>
</feature>
<feature type="binding site" evidence="1">
    <location>
        <position position="307"/>
    </location>
    <ligand>
        <name>NAD(+)</name>
        <dbReference type="ChEBI" id="CHEBI:57540"/>
    </ligand>
</feature>
<feature type="binding site" evidence="1">
    <location>
        <position position="401"/>
    </location>
    <ligand>
        <name>Zn(2+)</name>
        <dbReference type="ChEBI" id="CHEBI:29105"/>
    </ligand>
</feature>
<feature type="binding site" evidence="1">
    <location>
        <position position="404"/>
    </location>
    <ligand>
        <name>Zn(2+)</name>
        <dbReference type="ChEBI" id="CHEBI:29105"/>
    </ligand>
</feature>
<feature type="binding site" evidence="1">
    <location>
        <position position="419"/>
    </location>
    <ligand>
        <name>Zn(2+)</name>
        <dbReference type="ChEBI" id="CHEBI:29105"/>
    </ligand>
</feature>
<feature type="binding site" evidence="1">
    <location>
        <position position="424"/>
    </location>
    <ligand>
        <name>Zn(2+)</name>
        <dbReference type="ChEBI" id="CHEBI:29105"/>
    </ligand>
</feature>
<organism>
    <name type="scientific">Syntrophomonas wolfei subsp. wolfei (strain DSM 2245B / Goettingen)</name>
    <dbReference type="NCBI Taxonomy" id="335541"/>
    <lineage>
        <taxon>Bacteria</taxon>
        <taxon>Bacillati</taxon>
        <taxon>Bacillota</taxon>
        <taxon>Clostridia</taxon>
        <taxon>Eubacteriales</taxon>
        <taxon>Syntrophomonadaceae</taxon>
        <taxon>Syntrophomonas</taxon>
    </lineage>
</organism>
<proteinExistence type="inferred from homology"/>